<organism>
    <name type="scientific">Idiomarina loihiensis (strain ATCC BAA-735 / DSM 15497 / L2-TR)</name>
    <dbReference type="NCBI Taxonomy" id="283942"/>
    <lineage>
        <taxon>Bacteria</taxon>
        <taxon>Pseudomonadati</taxon>
        <taxon>Pseudomonadota</taxon>
        <taxon>Gammaproteobacteria</taxon>
        <taxon>Alteromonadales</taxon>
        <taxon>Idiomarinaceae</taxon>
        <taxon>Idiomarina</taxon>
    </lineage>
</organism>
<dbReference type="EMBL" id="AE017340">
    <property type="protein sequence ID" value="AAV82749.1"/>
    <property type="molecule type" value="Genomic_DNA"/>
</dbReference>
<dbReference type="RefSeq" id="WP_011235146.1">
    <property type="nucleotide sequence ID" value="NC_006512.1"/>
</dbReference>
<dbReference type="SMR" id="Q5QXY4"/>
<dbReference type="STRING" id="283942.IL1917"/>
<dbReference type="GeneID" id="78252636"/>
<dbReference type="KEGG" id="ilo:IL1917"/>
<dbReference type="eggNOG" id="COG0197">
    <property type="taxonomic scope" value="Bacteria"/>
</dbReference>
<dbReference type="HOGENOM" id="CLU_078858_2_1_6"/>
<dbReference type="OrthoDB" id="9802589at2"/>
<dbReference type="Proteomes" id="UP000001171">
    <property type="component" value="Chromosome"/>
</dbReference>
<dbReference type="GO" id="GO:0022625">
    <property type="term" value="C:cytosolic large ribosomal subunit"/>
    <property type="evidence" value="ECO:0007669"/>
    <property type="project" value="TreeGrafter"/>
</dbReference>
<dbReference type="GO" id="GO:0019843">
    <property type="term" value="F:rRNA binding"/>
    <property type="evidence" value="ECO:0007669"/>
    <property type="project" value="UniProtKB-UniRule"/>
</dbReference>
<dbReference type="GO" id="GO:0003735">
    <property type="term" value="F:structural constituent of ribosome"/>
    <property type="evidence" value="ECO:0007669"/>
    <property type="project" value="InterPro"/>
</dbReference>
<dbReference type="GO" id="GO:0000049">
    <property type="term" value="F:tRNA binding"/>
    <property type="evidence" value="ECO:0007669"/>
    <property type="project" value="UniProtKB-KW"/>
</dbReference>
<dbReference type="GO" id="GO:0006412">
    <property type="term" value="P:translation"/>
    <property type="evidence" value="ECO:0007669"/>
    <property type="project" value="UniProtKB-UniRule"/>
</dbReference>
<dbReference type="CDD" id="cd01433">
    <property type="entry name" value="Ribosomal_L16_L10e"/>
    <property type="match status" value="1"/>
</dbReference>
<dbReference type="FunFam" id="3.90.1170.10:FF:000001">
    <property type="entry name" value="50S ribosomal protein L16"/>
    <property type="match status" value="1"/>
</dbReference>
<dbReference type="Gene3D" id="3.90.1170.10">
    <property type="entry name" value="Ribosomal protein L10e/L16"/>
    <property type="match status" value="1"/>
</dbReference>
<dbReference type="HAMAP" id="MF_01342">
    <property type="entry name" value="Ribosomal_uL16"/>
    <property type="match status" value="1"/>
</dbReference>
<dbReference type="InterPro" id="IPR047873">
    <property type="entry name" value="Ribosomal_uL16"/>
</dbReference>
<dbReference type="InterPro" id="IPR000114">
    <property type="entry name" value="Ribosomal_uL16_bact-type"/>
</dbReference>
<dbReference type="InterPro" id="IPR020798">
    <property type="entry name" value="Ribosomal_uL16_CS"/>
</dbReference>
<dbReference type="InterPro" id="IPR016180">
    <property type="entry name" value="Ribosomal_uL16_dom"/>
</dbReference>
<dbReference type="InterPro" id="IPR036920">
    <property type="entry name" value="Ribosomal_uL16_sf"/>
</dbReference>
<dbReference type="NCBIfam" id="TIGR01164">
    <property type="entry name" value="rplP_bact"/>
    <property type="match status" value="1"/>
</dbReference>
<dbReference type="PANTHER" id="PTHR12220">
    <property type="entry name" value="50S/60S RIBOSOMAL PROTEIN L16"/>
    <property type="match status" value="1"/>
</dbReference>
<dbReference type="PANTHER" id="PTHR12220:SF13">
    <property type="entry name" value="LARGE RIBOSOMAL SUBUNIT PROTEIN UL16M"/>
    <property type="match status" value="1"/>
</dbReference>
<dbReference type="Pfam" id="PF00252">
    <property type="entry name" value="Ribosomal_L16"/>
    <property type="match status" value="1"/>
</dbReference>
<dbReference type="PRINTS" id="PR00060">
    <property type="entry name" value="RIBOSOMALL16"/>
</dbReference>
<dbReference type="SUPFAM" id="SSF54686">
    <property type="entry name" value="Ribosomal protein L16p/L10e"/>
    <property type="match status" value="1"/>
</dbReference>
<dbReference type="PROSITE" id="PS00586">
    <property type="entry name" value="RIBOSOMAL_L16_1"/>
    <property type="match status" value="1"/>
</dbReference>
<dbReference type="PROSITE" id="PS00701">
    <property type="entry name" value="RIBOSOMAL_L16_2"/>
    <property type="match status" value="1"/>
</dbReference>
<proteinExistence type="inferred from homology"/>
<sequence length="137" mass="15755">MLQPKRTKFRKVHTGRNRGLAQSGNKVSFGTFGLKATDRGRMTARQIEAGRRAMTRHVKRQGKIWIRVFPDKPITKKPLEVRMGKGKGNVEYWVAQIQPGRVLYEMDGVPEELAREAFRLAARKLPFKTTFVTRTVM</sequence>
<accession>Q5QXY4</accession>
<comment type="function">
    <text evidence="1">Binds 23S rRNA and is also seen to make contacts with the A and possibly P site tRNAs.</text>
</comment>
<comment type="subunit">
    <text evidence="1">Part of the 50S ribosomal subunit.</text>
</comment>
<comment type="similarity">
    <text evidence="1">Belongs to the universal ribosomal protein uL16 family.</text>
</comment>
<protein>
    <recommendedName>
        <fullName evidence="1">Large ribosomal subunit protein uL16</fullName>
    </recommendedName>
    <alternativeName>
        <fullName evidence="3">50S ribosomal protein L16</fullName>
    </alternativeName>
</protein>
<feature type="chain" id="PRO_0000062117" description="Large ribosomal subunit protein uL16">
    <location>
        <begin position="1"/>
        <end position="137"/>
    </location>
</feature>
<feature type="region of interest" description="Disordered" evidence="2">
    <location>
        <begin position="1"/>
        <end position="22"/>
    </location>
</feature>
<feature type="compositionally biased region" description="Basic residues" evidence="2">
    <location>
        <begin position="1"/>
        <end position="16"/>
    </location>
</feature>
<evidence type="ECO:0000255" key="1">
    <source>
        <dbReference type="HAMAP-Rule" id="MF_01342"/>
    </source>
</evidence>
<evidence type="ECO:0000256" key="2">
    <source>
        <dbReference type="SAM" id="MobiDB-lite"/>
    </source>
</evidence>
<evidence type="ECO:0000305" key="3"/>
<name>RL16_IDILO</name>
<keyword id="KW-1185">Reference proteome</keyword>
<keyword id="KW-0687">Ribonucleoprotein</keyword>
<keyword id="KW-0689">Ribosomal protein</keyword>
<keyword id="KW-0694">RNA-binding</keyword>
<keyword id="KW-0699">rRNA-binding</keyword>
<keyword id="KW-0820">tRNA-binding</keyword>
<reference key="1">
    <citation type="journal article" date="2004" name="Proc. Natl. Acad. Sci. U.S.A.">
        <title>Genome sequence of the deep-sea gamma-proteobacterium Idiomarina loihiensis reveals amino acid fermentation as a source of carbon and energy.</title>
        <authorList>
            <person name="Hou S."/>
            <person name="Saw J.H."/>
            <person name="Lee K.S."/>
            <person name="Freitas T.A."/>
            <person name="Belisle C."/>
            <person name="Kawarabayasi Y."/>
            <person name="Donachie S.P."/>
            <person name="Pikina A."/>
            <person name="Galperin M.Y."/>
            <person name="Koonin E.V."/>
            <person name="Makarova K.S."/>
            <person name="Omelchenko M.V."/>
            <person name="Sorokin A."/>
            <person name="Wolf Y.I."/>
            <person name="Li Q.X."/>
            <person name="Keum Y.S."/>
            <person name="Campbell S."/>
            <person name="Denery J."/>
            <person name="Aizawa S."/>
            <person name="Shibata S."/>
            <person name="Malahoff A."/>
            <person name="Alam M."/>
        </authorList>
    </citation>
    <scope>NUCLEOTIDE SEQUENCE [LARGE SCALE GENOMIC DNA]</scope>
    <source>
        <strain>ATCC BAA-735 / DSM 15497 / L2-TR</strain>
    </source>
</reference>
<gene>
    <name evidence="1" type="primary">rplP</name>
    <name type="ordered locus">IL1917</name>
</gene>